<comment type="catalytic activity">
    <reaction evidence="1">
        <text>tRNA(Phe) + L-phenylalanine + ATP = L-phenylalanyl-tRNA(Phe) + AMP + diphosphate + H(+)</text>
        <dbReference type="Rhea" id="RHEA:19413"/>
        <dbReference type="Rhea" id="RHEA-COMP:9668"/>
        <dbReference type="Rhea" id="RHEA-COMP:9699"/>
        <dbReference type="ChEBI" id="CHEBI:15378"/>
        <dbReference type="ChEBI" id="CHEBI:30616"/>
        <dbReference type="ChEBI" id="CHEBI:33019"/>
        <dbReference type="ChEBI" id="CHEBI:58095"/>
        <dbReference type="ChEBI" id="CHEBI:78442"/>
        <dbReference type="ChEBI" id="CHEBI:78531"/>
        <dbReference type="ChEBI" id="CHEBI:456215"/>
        <dbReference type="EC" id="6.1.1.20"/>
    </reaction>
</comment>
<comment type="cofactor">
    <cofactor evidence="1">
        <name>Mg(2+)</name>
        <dbReference type="ChEBI" id="CHEBI:18420"/>
    </cofactor>
    <text evidence="1">Binds 2 magnesium ions per tetramer.</text>
</comment>
<comment type="subunit">
    <text evidence="1">Tetramer of two alpha and two beta subunits.</text>
</comment>
<comment type="subcellular location">
    <subcellularLocation>
        <location evidence="1">Cytoplasm</location>
    </subcellularLocation>
</comment>
<comment type="similarity">
    <text evidence="1">Belongs to the class-II aminoacyl-tRNA synthetase family. Phe-tRNA synthetase alpha subunit type 1 subfamily.</text>
</comment>
<organism>
    <name type="scientific">Hahella chejuensis (strain KCTC 2396)</name>
    <dbReference type="NCBI Taxonomy" id="349521"/>
    <lineage>
        <taxon>Bacteria</taxon>
        <taxon>Pseudomonadati</taxon>
        <taxon>Pseudomonadota</taxon>
        <taxon>Gammaproteobacteria</taxon>
        <taxon>Oceanospirillales</taxon>
        <taxon>Hahellaceae</taxon>
        <taxon>Hahella</taxon>
    </lineage>
</organism>
<keyword id="KW-0030">Aminoacyl-tRNA synthetase</keyword>
<keyword id="KW-0067">ATP-binding</keyword>
<keyword id="KW-0963">Cytoplasm</keyword>
<keyword id="KW-0436">Ligase</keyword>
<keyword id="KW-0460">Magnesium</keyword>
<keyword id="KW-0479">Metal-binding</keyword>
<keyword id="KW-0547">Nucleotide-binding</keyword>
<keyword id="KW-0648">Protein biosynthesis</keyword>
<keyword id="KW-1185">Reference proteome</keyword>
<sequence length="331" mass="37712">MENLEGIVDRAKDAVAKAESEQSLEQLRVDYLGKKGRITQLLKELGRLDAAERPAAGAKINEAKLLVQDLINEAKSELSSKNEAAKLAAESIDVTLPGRKESLGTLHPVTRTMLRIEDFFARSGYTVEEGPEIQDDYHNFEALNIPSHHPARAMHDTFYFDPKTLLRTHTSPVQIRVMESSKPPFRMICPGRVYRCDSDMTHTPMFHQVEGLMVDKHVSFADLKSTIVEFLREFFEKDLEVRFRPSYFPFTEPSAEVDIEWGRNEDGSIKWLEVMGCGMVHPKVFEAAGVDSETYSGFAFGMGVERLAMLRYGVNDLRMFFENDMRFLDQF</sequence>
<protein>
    <recommendedName>
        <fullName evidence="1">Phenylalanine--tRNA ligase alpha subunit</fullName>
        <ecNumber evidence="1">6.1.1.20</ecNumber>
    </recommendedName>
    <alternativeName>
        <fullName evidence="1">Phenylalanyl-tRNA synthetase alpha subunit</fullName>
        <shortName evidence="1">PheRS</shortName>
    </alternativeName>
</protein>
<gene>
    <name evidence="1" type="primary">pheS</name>
    <name type="ordered locus">HCH_04575</name>
</gene>
<dbReference type="EC" id="6.1.1.20" evidence="1"/>
<dbReference type="EMBL" id="CP000155">
    <property type="protein sequence ID" value="ABC31278.1"/>
    <property type="molecule type" value="Genomic_DNA"/>
</dbReference>
<dbReference type="RefSeq" id="WP_011398343.1">
    <property type="nucleotide sequence ID" value="NC_007645.1"/>
</dbReference>
<dbReference type="SMR" id="Q2SDJ6"/>
<dbReference type="STRING" id="349521.HCH_04575"/>
<dbReference type="KEGG" id="hch:HCH_04575"/>
<dbReference type="eggNOG" id="COG0016">
    <property type="taxonomic scope" value="Bacteria"/>
</dbReference>
<dbReference type="HOGENOM" id="CLU_025086_0_1_6"/>
<dbReference type="OrthoDB" id="9800719at2"/>
<dbReference type="Proteomes" id="UP000000238">
    <property type="component" value="Chromosome"/>
</dbReference>
<dbReference type="GO" id="GO:0005737">
    <property type="term" value="C:cytoplasm"/>
    <property type="evidence" value="ECO:0007669"/>
    <property type="project" value="UniProtKB-SubCell"/>
</dbReference>
<dbReference type="GO" id="GO:0005524">
    <property type="term" value="F:ATP binding"/>
    <property type="evidence" value="ECO:0007669"/>
    <property type="project" value="UniProtKB-UniRule"/>
</dbReference>
<dbReference type="GO" id="GO:0000287">
    <property type="term" value="F:magnesium ion binding"/>
    <property type="evidence" value="ECO:0007669"/>
    <property type="project" value="UniProtKB-UniRule"/>
</dbReference>
<dbReference type="GO" id="GO:0004826">
    <property type="term" value="F:phenylalanine-tRNA ligase activity"/>
    <property type="evidence" value="ECO:0007669"/>
    <property type="project" value="UniProtKB-UniRule"/>
</dbReference>
<dbReference type="GO" id="GO:0000049">
    <property type="term" value="F:tRNA binding"/>
    <property type="evidence" value="ECO:0007669"/>
    <property type="project" value="InterPro"/>
</dbReference>
<dbReference type="GO" id="GO:0006432">
    <property type="term" value="P:phenylalanyl-tRNA aminoacylation"/>
    <property type="evidence" value="ECO:0007669"/>
    <property type="project" value="UniProtKB-UniRule"/>
</dbReference>
<dbReference type="CDD" id="cd00496">
    <property type="entry name" value="PheRS_alpha_core"/>
    <property type="match status" value="1"/>
</dbReference>
<dbReference type="FunFam" id="3.30.930.10:FF:000003">
    <property type="entry name" value="Phenylalanine--tRNA ligase alpha subunit"/>
    <property type="match status" value="1"/>
</dbReference>
<dbReference type="Gene3D" id="3.30.930.10">
    <property type="entry name" value="Bira Bifunctional Protein, Domain 2"/>
    <property type="match status" value="1"/>
</dbReference>
<dbReference type="HAMAP" id="MF_00281">
    <property type="entry name" value="Phe_tRNA_synth_alpha1"/>
    <property type="match status" value="1"/>
</dbReference>
<dbReference type="InterPro" id="IPR006195">
    <property type="entry name" value="aa-tRNA-synth_II"/>
</dbReference>
<dbReference type="InterPro" id="IPR045864">
    <property type="entry name" value="aa-tRNA-synth_II/BPL/LPL"/>
</dbReference>
<dbReference type="InterPro" id="IPR004529">
    <property type="entry name" value="Phe-tRNA-synth_IIc_asu"/>
</dbReference>
<dbReference type="InterPro" id="IPR004188">
    <property type="entry name" value="Phe-tRNA_ligase_II_N"/>
</dbReference>
<dbReference type="InterPro" id="IPR022911">
    <property type="entry name" value="Phe_tRNA_ligase_alpha1_bac"/>
</dbReference>
<dbReference type="InterPro" id="IPR002319">
    <property type="entry name" value="Phenylalanyl-tRNA_Synthase"/>
</dbReference>
<dbReference type="InterPro" id="IPR010978">
    <property type="entry name" value="tRNA-bd_arm"/>
</dbReference>
<dbReference type="NCBIfam" id="TIGR00468">
    <property type="entry name" value="pheS"/>
    <property type="match status" value="1"/>
</dbReference>
<dbReference type="PANTHER" id="PTHR11538:SF41">
    <property type="entry name" value="PHENYLALANINE--TRNA LIGASE, MITOCHONDRIAL"/>
    <property type="match status" value="1"/>
</dbReference>
<dbReference type="PANTHER" id="PTHR11538">
    <property type="entry name" value="PHENYLALANYL-TRNA SYNTHETASE"/>
    <property type="match status" value="1"/>
</dbReference>
<dbReference type="Pfam" id="PF02912">
    <property type="entry name" value="Phe_tRNA-synt_N"/>
    <property type="match status" value="1"/>
</dbReference>
<dbReference type="Pfam" id="PF01409">
    <property type="entry name" value="tRNA-synt_2d"/>
    <property type="match status" value="1"/>
</dbReference>
<dbReference type="SUPFAM" id="SSF55681">
    <property type="entry name" value="Class II aaRS and biotin synthetases"/>
    <property type="match status" value="1"/>
</dbReference>
<dbReference type="SUPFAM" id="SSF46589">
    <property type="entry name" value="tRNA-binding arm"/>
    <property type="match status" value="1"/>
</dbReference>
<dbReference type="PROSITE" id="PS50862">
    <property type="entry name" value="AA_TRNA_LIGASE_II"/>
    <property type="match status" value="1"/>
</dbReference>
<evidence type="ECO:0000255" key="1">
    <source>
        <dbReference type="HAMAP-Rule" id="MF_00281"/>
    </source>
</evidence>
<feature type="chain" id="PRO_1000006840" description="Phenylalanine--tRNA ligase alpha subunit">
    <location>
        <begin position="1"/>
        <end position="331"/>
    </location>
</feature>
<feature type="binding site" evidence="1">
    <location>
        <position position="252"/>
    </location>
    <ligand>
        <name>Mg(2+)</name>
        <dbReference type="ChEBI" id="CHEBI:18420"/>
        <note>shared with beta subunit</note>
    </ligand>
</feature>
<proteinExistence type="inferred from homology"/>
<name>SYFA_HAHCH</name>
<reference key="1">
    <citation type="journal article" date="2005" name="Nucleic Acids Res.">
        <title>Genomic blueprint of Hahella chejuensis, a marine microbe producing an algicidal agent.</title>
        <authorList>
            <person name="Jeong H."/>
            <person name="Yim J.H."/>
            <person name="Lee C."/>
            <person name="Choi S.-H."/>
            <person name="Park Y.K."/>
            <person name="Yoon S.H."/>
            <person name="Hur C.-G."/>
            <person name="Kang H.-Y."/>
            <person name="Kim D."/>
            <person name="Lee H.H."/>
            <person name="Park K.H."/>
            <person name="Park S.-H."/>
            <person name="Park H.-S."/>
            <person name="Lee H.K."/>
            <person name="Oh T.K."/>
            <person name="Kim J.F."/>
        </authorList>
    </citation>
    <scope>NUCLEOTIDE SEQUENCE [LARGE SCALE GENOMIC DNA]</scope>
    <source>
        <strain>KCTC 2396</strain>
    </source>
</reference>
<accession>Q2SDJ6</accession>